<reference key="1">
    <citation type="submission" date="2007-03" db="EMBL/GenBank/DDBJ databases">
        <title>Sequencing analysis of Barbarea verna chloroplast DNA.</title>
        <authorList>
            <person name="Hosouchi T."/>
            <person name="Tsuruoka H."/>
            <person name="Kotani H."/>
        </authorList>
    </citation>
    <scope>NUCLEOTIDE SEQUENCE [LARGE SCALE GENOMIC DNA]</scope>
</reference>
<geneLocation type="chloroplast"/>
<evidence type="ECO:0000255" key="1">
    <source>
        <dbReference type="HAMAP-Rule" id="MF_01321"/>
    </source>
</evidence>
<accession>A4QK97</accession>
<keyword id="KW-0150">Chloroplast</keyword>
<keyword id="KW-0240">DNA-directed RNA polymerase</keyword>
<keyword id="KW-0548">Nucleotidyltransferase</keyword>
<keyword id="KW-0934">Plastid</keyword>
<keyword id="KW-0804">Transcription</keyword>
<keyword id="KW-0808">Transferase</keyword>
<sequence length="1072" mass="121054">MLGDGKEGTSTIPGFNQIQFEGFYRFIDQGLIEELSKFPKIEDIDHEIEFQLFMETYQLVEPLIKERDAVYESLTYSSELYVSAGLIWKTSRNMQEQRIFIGNIPLMNSLGTSIVNGIYRIVINQILQSPGIYYQSELDHNGISVYTGTIISDWGGRLELEIDKKARIWARVSRKQKISILVLSSAMGSNLREILENVCYPEIFLSFLTDKEKKKIGSKENAILEFYQQFSCVGGDPIFSESLCKELQKKFFHQRCELGRIGRRNINWRLNLNIPQNNIFLLPRDILAAADHLIGMKFGMGTLDDMNHLKNKRIRSVADLLQDQLGLALARLENVVKGTISGAIRHKLIPTPQNLVTSTPLTTTYESFFGLHPLSQVLDRTNPLTQIVHGRKLSYLGPGGLTGRTANFRIRDIHPSHYGRICPIDTSEGINVGLIGSLSIHARIGDWGSLESPFYELFEKSKKARIRMLFLSPSQDEYYMIAAGNSLALNRGIQEEQAVPARYRQEFLTIAWEEVHLRSIFPFQYFSIGASLIPFIEHNDANRALMSSNMQRQAVPLSRSEKCIVGTGLERQVALDSGVPAIAEHEGKILYTDTEKIVFSGNGDTLSIPLIMYERSNKNTCMHQKPQVRRGKCIKKGQILADGAATVGGELALGKNILVAYMPWEGYNFEDAVLISECLVYGDIYTSFHIRKYEIQTHVTTQGPERITKEIPHLEGRLLRNLDKNGIVMLGSWVETGDILVGKLTPQVAKESSYAPEDRLLRAILGIQVSTSKETCLKLPIGGRGRVIDVRWVQKKGGSSYNPEIIRVYISQKREIKVGDKVAGRHGNKGIISKILPRQDMPYLQDGRPVDMVFNPLGVPSRMNVGQIFECSLGLAGSLLDRHYRIAPFDERYEQEASRKLVFSELYEASKQTANPWVFEPEYPGKSRIFDGRTGDPFEQPVIIGKPYILKLIHQVDDKIHGRSSGHYALVTQQPLRGRSKQGGQRVGEMEVWALEGFGVAHILQEMLTYKSDHIRARQEVLGTTIIGGTIPKPEDAPESFRLLVRELRSLALELNHFLVSEKNFQINRKEV</sequence>
<proteinExistence type="inferred from homology"/>
<gene>
    <name evidence="1" type="primary">rpoB</name>
</gene>
<comment type="function">
    <text evidence="1">DNA-dependent RNA polymerase catalyzes the transcription of DNA into RNA using the four ribonucleoside triphosphates as substrates.</text>
</comment>
<comment type="catalytic activity">
    <reaction evidence="1">
        <text>RNA(n) + a ribonucleoside 5'-triphosphate = RNA(n+1) + diphosphate</text>
        <dbReference type="Rhea" id="RHEA:21248"/>
        <dbReference type="Rhea" id="RHEA-COMP:14527"/>
        <dbReference type="Rhea" id="RHEA-COMP:17342"/>
        <dbReference type="ChEBI" id="CHEBI:33019"/>
        <dbReference type="ChEBI" id="CHEBI:61557"/>
        <dbReference type="ChEBI" id="CHEBI:140395"/>
        <dbReference type="EC" id="2.7.7.6"/>
    </reaction>
</comment>
<comment type="subunit">
    <text evidence="1">In plastids the minimal PEP RNA polymerase catalytic core is composed of four subunits: alpha, beta, beta', and beta''. When a (nuclear-encoded) sigma factor is associated with the core the holoenzyme is formed, which can initiate transcription.</text>
</comment>
<comment type="subcellular location">
    <subcellularLocation>
        <location>Plastid</location>
        <location>Chloroplast</location>
    </subcellularLocation>
</comment>
<comment type="similarity">
    <text evidence="1">Belongs to the RNA polymerase beta chain family.</text>
</comment>
<dbReference type="EC" id="2.7.7.6" evidence="1"/>
<dbReference type="EMBL" id="AP009370">
    <property type="protein sequence ID" value="BAF50102.1"/>
    <property type="molecule type" value="Genomic_DNA"/>
</dbReference>
<dbReference type="RefSeq" id="YP_001123278.1">
    <property type="nucleotide sequence ID" value="NC_009269.1"/>
</dbReference>
<dbReference type="SMR" id="A4QK97"/>
<dbReference type="GeneID" id="4961892"/>
<dbReference type="GO" id="GO:0009507">
    <property type="term" value="C:chloroplast"/>
    <property type="evidence" value="ECO:0007669"/>
    <property type="project" value="UniProtKB-SubCell"/>
</dbReference>
<dbReference type="GO" id="GO:0000428">
    <property type="term" value="C:DNA-directed RNA polymerase complex"/>
    <property type="evidence" value="ECO:0007669"/>
    <property type="project" value="UniProtKB-KW"/>
</dbReference>
<dbReference type="GO" id="GO:0005739">
    <property type="term" value="C:mitochondrion"/>
    <property type="evidence" value="ECO:0007669"/>
    <property type="project" value="GOC"/>
</dbReference>
<dbReference type="GO" id="GO:0003677">
    <property type="term" value="F:DNA binding"/>
    <property type="evidence" value="ECO:0007669"/>
    <property type="project" value="UniProtKB-UniRule"/>
</dbReference>
<dbReference type="GO" id="GO:0003899">
    <property type="term" value="F:DNA-directed RNA polymerase activity"/>
    <property type="evidence" value="ECO:0007669"/>
    <property type="project" value="UniProtKB-UniRule"/>
</dbReference>
<dbReference type="GO" id="GO:0032549">
    <property type="term" value="F:ribonucleoside binding"/>
    <property type="evidence" value="ECO:0007669"/>
    <property type="project" value="InterPro"/>
</dbReference>
<dbReference type="GO" id="GO:0006351">
    <property type="term" value="P:DNA-templated transcription"/>
    <property type="evidence" value="ECO:0007669"/>
    <property type="project" value="UniProtKB-UniRule"/>
</dbReference>
<dbReference type="CDD" id="cd00653">
    <property type="entry name" value="RNA_pol_B_RPB2"/>
    <property type="match status" value="1"/>
</dbReference>
<dbReference type="FunFam" id="2.40.50.150:FF:000006">
    <property type="entry name" value="DNA-directed RNA polymerase subunit beta"/>
    <property type="match status" value="1"/>
</dbReference>
<dbReference type="FunFam" id="3.90.1110.10:FF:000009">
    <property type="entry name" value="DNA-directed RNA polymerase subunit beta"/>
    <property type="match status" value="1"/>
</dbReference>
<dbReference type="Gene3D" id="2.40.50.100">
    <property type="match status" value="1"/>
</dbReference>
<dbReference type="Gene3D" id="2.40.50.150">
    <property type="match status" value="1"/>
</dbReference>
<dbReference type="Gene3D" id="3.90.1100.10">
    <property type="match status" value="1"/>
</dbReference>
<dbReference type="Gene3D" id="2.30.150.10">
    <property type="entry name" value="DNA-directed RNA polymerase, beta subunit, external 1 domain"/>
    <property type="match status" value="1"/>
</dbReference>
<dbReference type="Gene3D" id="2.40.270.10">
    <property type="entry name" value="DNA-directed RNA polymerase, subunit 2, domain 6"/>
    <property type="match status" value="2"/>
</dbReference>
<dbReference type="Gene3D" id="3.90.1800.10">
    <property type="entry name" value="RNA polymerase alpha subunit dimerisation domain"/>
    <property type="match status" value="1"/>
</dbReference>
<dbReference type="Gene3D" id="3.90.1110.10">
    <property type="entry name" value="RNA polymerase Rpb2, domain 2"/>
    <property type="match status" value="1"/>
</dbReference>
<dbReference type="HAMAP" id="MF_01321">
    <property type="entry name" value="RNApol_bact_RpoB"/>
    <property type="match status" value="1"/>
</dbReference>
<dbReference type="InterPro" id="IPR042107">
    <property type="entry name" value="DNA-dir_RNA_pol_bsu_ext_1_sf"/>
</dbReference>
<dbReference type="InterPro" id="IPR015712">
    <property type="entry name" value="DNA-dir_RNA_pol_su2"/>
</dbReference>
<dbReference type="InterPro" id="IPR007120">
    <property type="entry name" value="DNA-dir_RNAP_su2_dom"/>
</dbReference>
<dbReference type="InterPro" id="IPR037033">
    <property type="entry name" value="DNA-dir_RNAP_su2_hyb_sf"/>
</dbReference>
<dbReference type="InterPro" id="IPR010243">
    <property type="entry name" value="RNA_pol_bsu_bac"/>
</dbReference>
<dbReference type="InterPro" id="IPR007121">
    <property type="entry name" value="RNA_pol_bsu_CS"/>
</dbReference>
<dbReference type="InterPro" id="IPR007642">
    <property type="entry name" value="RNA_pol_Rpb2_2"/>
</dbReference>
<dbReference type="InterPro" id="IPR037034">
    <property type="entry name" value="RNA_pol_Rpb2_2_sf"/>
</dbReference>
<dbReference type="InterPro" id="IPR007645">
    <property type="entry name" value="RNA_pol_Rpb2_3"/>
</dbReference>
<dbReference type="InterPro" id="IPR007641">
    <property type="entry name" value="RNA_pol_Rpb2_7"/>
</dbReference>
<dbReference type="InterPro" id="IPR014724">
    <property type="entry name" value="RNA_pol_RPB2_OB-fold"/>
</dbReference>
<dbReference type="NCBIfam" id="NF001616">
    <property type="entry name" value="PRK00405.1"/>
    <property type="match status" value="1"/>
</dbReference>
<dbReference type="PANTHER" id="PTHR20856">
    <property type="entry name" value="DNA-DIRECTED RNA POLYMERASE I SUBUNIT 2"/>
    <property type="match status" value="1"/>
</dbReference>
<dbReference type="Pfam" id="PF04561">
    <property type="entry name" value="RNA_pol_Rpb2_2"/>
    <property type="match status" value="1"/>
</dbReference>
<dbReference type="Pfam" id="PF04565">
    <property type="entry name" value="RNA_pol_Rpb2_3"/>
    <property type="match status" value="1"/>
</dbReference>
<dbReference type="Pfam" id="PF00562">
    <property type="entry name" value="RNA_pol_Rpb2_6"/>
    <property type="match status" value="1"/>
</dbReference>
<dbReference type="Pfam" id="PF04560">
    <property type="entry name" value="RNA_pol_Rpb2_7"/>
    <property type="match status" value="1"/>
</dbReference>
<dbReference type="SUPFAM" id="SSF64484">
    <property type="entry name" value="beta and beta-prime subunits of DNA dependent RNA-polymerase"/>
    <property type="match status" value="1"/>
</dbReference>
<dbReference type="PROSITE" id="PS01166">
    <property type="entry name" value="RNA_POL_BETA"/>
    <property type="match status" value="1"/>
</dbReference>
<feature type="chain" id="PRO_0000300433" description="DNA-directed RNA polymerase subunit beta">
    <location>
        <begin position="1"/>
        <end position="1072"/>
    </location>
</feature>
<name>RPOB_BARVE</name>
<organism>
    <name type="scientific">Barbarea verna</name>
    <name type="common">Land cress</name>
    <name type="synonym">Erysimum vernum</name>
    <dbReference type="NCBI Taxonomy" id="50458"/>
    <lineage>
        <taxon>Eukaryota</taxon>
        <taxon>Viridiplantae</taxon>
        <taxon>Streptophyta</taxon>
        <taxon>Embryophyta</taxon>
        <taxon>Tracheophyta</taxon>
        <taxon>Spermatophyta</taxon>
        <taxon>Magnoliopsida</taxon>
        <taxon>eudicotyledons</taxon>
        <taxon>Gunneridae</taxon>
        <taxon>Pentapetalae</taxon>
        <taxon>rosids</taxon>
        <taxon>malvids</taxon>
        <taxon>Brassicales</taxon>
        <taxon>Brassicaceae</taxon>
        <taxon>Cardamineae</taxon>
        <taxon>Barbarea</taxon>
    </lineage>
</organism>
<protein>
    <recommendedName>
        <fullName evidence="1">DNA-directed RNA polymerase subunit beta</fullName>
        <ecNumber evidence="1">2.7.7.6</ecNumber>
    </recommendedName>
    <alternativeName>
        <fullName evidence="1">PEP</fullName>
    </alternativeName>
    <alternativeName>
        <fullName evidence="1">Plastid-encoded RNA polymerase subunit beta</fullName>
        <shortName evidence="1">RNA polymerase subunit beta</shortName>
    </alternativeName>
</protein>